<name>CHEB_BACSU</name>
<proteinExistence type="inferred from homology"/>
<feature type="chain" id="PRO_0000157976" description="Protein-glutamate methylesterase/protein-glutamine glutaminase">
    <location>
        <begin position="1"/>
        <end position="357"/>
    </location>
</feature>
<feature type="domain" description="Response regulatory" evidence="1">
    <location>
        <begin position="3"/>
        <end position="120"/>
    </location>
</feature>
<feature type="domain" description="CheB-type methylesterase" evidence="1">
    <location>
        <begin position="161"/>
        <end position="355"/>
    </location>
</feature>
<feature type="active site" evidence="1">
    <location>
        <position position="173"/>
    </location>
</feature>
<feature type="active site" evidence="1">
    <location>
        <position position="200"/>
    </location>
</feature>
<feature type="active site" evidence="1">
    <location>
        <position position="296"/>
    </location>
</feature>
<feature type="modified residue" description="4-aspartylphosphate" evidence="1">
    <location>
        <position position="54"/>
    </location>
</feature>
<feature type="sequence conflict" description="In Ref. 1; CAA48007." evidence="2" ref="1">
    <original>L</original>
    <variation>V</variation>
    <location>
        <position position="66"/>
    </location>
</feature>
<reference key="1">
    <citation type="journal article" date="1993" name="J. Biol. Chem.">
        <title>Chemotactic methylesterase promotes adaptation to high concentrations of attractant in Bacillus subtilis.</title>
        <authorList>
            <person name="Kirsch M.L."/>
            <person name="Peters P.D."/>
            <person name="Hanlon D.W."/>
            <person name="Kirby J.R."/>
            <person name="Ordal G.W."/>
        </authorList>
    </citation>
    <scope>NUCLEOTIDE SEQUENCE [GENOMIC DNA]</scope>
</reference>
<reference key="2">
    <citation type="journal article" date="1997" name="Nature">
        <title>The complete genome sequence of the Gram-positive bacterium Bacillus subtilis.</title>
        <authorList>
            <person name="Kunst F."/>
            <person name="Ogasawara N."/>
            <person name="Moszer I."/>
            <person name="Albertini A.M."/>
            <person name="Alloni G."/>
            <person name="Azevedo V."/>
            <person name="Bertero M.G."/>
            <person name="Bessieres P."/>
            <person name="Bolotin A."/>
            <person name="Borchert S."/>
            <person name="Borriss R."/>
            <person name="Boursier L."/>
            <person name="Brans A."/>
            <person name="Braun M."/>
            <person name="Brignell S.C."/>
            <person name="Bron S."/>
            <person name="Brouillet S."/>
            <person name="Bruschi C.V."/>
            <person name="Caldwell B."/>
            <person name="Capuano V."/>
            <person name="Carter N.M."/>
            <person name="Choi S.-K."/>
            <person name="Codani J.-J."/>
            <person name="Connerton I.F."/>
            <person name="Cummings N.J."/>
            <person name="Daniel R.A."/>
            <person name="Denizot F."/>
            <person name="Devine K.M."/>
            <person name="Duesterhoeft A."/>
            <person name="Ehrlich S.D."/>
            <person name="Emmerson P.T."/>
            <person name="Entian K.-D."/>
            <person name="Errington J."/>
            <person name="Fabret C."/>
            <person name="Ferrari E."/>
            <person name="Foulger D."/>
            <person name="Fritz C."/>
            <person name="Fujita M."/>
            <person name="Fujita Y."/>
            <person name="Fuma S."/>
            <person name="Galizzi A."/>
            <person name="Galleron N."/>
            <person name="Ghim S.-Y."/>
            <person name="Glaser P."/>
            <person name="Goffeau A."/>
            <person name="Golightly E.J."/>
            <person name="Grandi G."/>
            <person name="Guiseppi G."/>
            <person name="Guy B.J."/>
            <person name="Haga K."/>
            <person name="Haiech J."/>
            <person name="Harwood C.R."/>
            <person name="Henaut A."/>
            <person name="Hilbert H."/>
            <person name="Holsappel S."/>
            <person name="Hosono S."/>
            <person name="Hullo M.-F."/>
            <person name="Itaya M."/>
            <person name="Jones L.-M."/>
            <person name="Joris B."/>
            <person name="Karamata D."/>
            <person name="Kasahara Y."/>
            <person name="Klaerr-Blanchard M."/>
            <person name="Klein C."/>
            <person name="Kobayashi Y."/>
            <person name="Koetter P."/>
            <person name="Koningstein G."/>
            <person name="Krogh S."/>
            <person name="Kumano M."/>
            <person name="Kurita K."/>
            <person name="Lapidus A."/>
            <person name="Lardinois S."/>
            <person name="Lauber J."/>
            <person name="Lazarevic V."/>
            <person name="Lee S.-M."/>
            <person name="Levine A."/>
            <person name="Liu H."/>
            <person name="Masuda S."/>
            <person name="Mauel C."/>
            <person name="Medigue C."/>
            <person name="Medina N."/>
            <person name="Mellado R.P."/>
            <person name="Mizuno M."/>
            <person name="Moestl D."/>
            <person name="Nakai S."/>
            <person name="Noback M."/>
            <person name="Noone D."/>
            <person name="O'Reilly M."/>
            <person name="Ogawa K."/>
            <person name="Ogiwara A."/>
            <person name="Oudega B."/>
            <person name="Park S.-H."/>
            <person name="Parro V."/>
            <person name="Pohl T.M."/>
            <person name="Portetelle D."/>
            <person name="Porwollik S."/>
            <person name="Prescott A.M."/>
            <person name="Presecan E."/>
            <person name="Pujic P."/>
            <person name="Purnelle B."/>
            <person name="Rapoport G."/>
            <person name="Rey M."/>
            <person name="Reynolds S."/>
            <person name="Rieger M."/>
            <person name="Rivolta C."/>
            <person name="Rocha E."/>
            <person name="Roche B."/>
            <person name="Rose M."/>
            <person name="Sadaie Y."/>
            <person name="Sato T."/>
            <person name="Scanlan E."/>
            <person name="Schleich S."/>
            <person name="Schroeter R."/>
            <person name="Scoffone F."/>
            <person name="Sekiguchi J."/>
            <person name="Sekowska A."/>
            <person name="Seror S.J."/>
            <person name="Serror P."/>
            <person name="Shin B.-S."/>
            <person name="Soldo B."/>
            <person name="Sorokin A."/>
            <person name="Tacconi E."/>
            <person name="Takagi T."/>
            <person name="Takahashi H."/>
            <person name="Takemaru K."/>
            <person name="Takeuchi M."/>
            <person name="Tamakoshi A."/>
            <person name="Tanaka T."/>
            <person name="Terpstra P."/>
            <person name="Tognoni A."/>
            <person name="Tosato V."/>
            <person name="Uchiyama S."/>
            <person name="Vandenbol M."/>
            <person name="Vannier F."/>
            <person name="Vassarotti A."/>
            <person name="Viari A."/>
            <person name="Wambutt R."/>
            <person name="Wedler E."/>
            <person name="Wedler H."/>
            <person name="Weitzenegger T."/>
            <person name="Winters P."/>
            <person name="Wipat A."/>
            <person name="Yamamoto H."/>
            <person name="Yamane K."/>
            <person name="Yasumoto K."/>
            <person name="Yata K."/>
            <person name="Yoshida K."/>
            <person name="Yoshikawa H.-F."/>
            <person name="Zumstein E."/>
            <person name="Yoshikawa H."/>
            <person name="Danchin A."/>
        </authorList>
    </citation>
    <scope>NUCLEOTIDE SEQUENCE [LARGE SCALE GENOMIC DNA]</scope>
    <source>
        <strain>168</strain>
    </source>
</reference>
<reference key="3">
    <citation type="journal article" date="2009" name="Microbiology">
        <title>From a consortium sequence to a unified sequence: the Bacillus subtilis 168 reference genome a decade later.</title>
        <authorList>
            <person name="Barbe V."/>
            <person name="Cruveiller S."/>
            <person name="Kunst F."/>
            <person name="Lenoble P."/>
            <person name="Meurice G."/>
            <person name="Sekowska A."/>
            <person name="Vallenet D."/>
            <person name="Wang T."/>
            <person name="Moszer I."/>
            <person name="Medigue C."/>
            <person name="Danchin A."/>
        </authorList>
    </citation>
    <scope>SEQUENCE REVISION TO 66</scope>
</reference>
<gene>
    <name evidence="1" type="primary">cheB</name>
    <name type="synonym">cheL</name>
    <name type="ordered locus">BSU16420</name>
</gene>
<evidence type="ECO:0000255" key="1">
    <source>
        <dbReference type="HAMAP-Rule" id="MF_00099"/>
    </source>
</evidence>
<evidence type="ECO:0000305" key="2"/>
<accession>Q05522</accession>
<dbReference type="EC" id="3.1.1.61" evidence="1"/>
<dbReference type="EC" id="3.5.1.44" evidence="1"/>
<dbReference type="EMBL" id="X67806">
    <property type="protein sequence ID" value="CAA48007.1"/>
    <property type="molecule type" value="Genomic_DNA"/>
</dbReference>
<dbReference type="EMBL" id="AL009126">
    <property type="protein sequence ID" value="CAB13515.2"/>
    <property type="molecule type" value="Genomic_DNA"/>
</dbReference>
<dbReference type="PIR" id="A48511">
    <property type="entry name" value="A48511"/>
</dbReference>
<dbReference type="RefSeq" id="NP_389524.2">
    <property type="nucleotide sequence ID" value="NC_000964.3"/>
</dbReference>
<dbReference type="RefSeq" id="WP_003245823.1">
    <property type="nucleotide sequence ID" value="NZ_OZ025638.1"/>
</dbReference>
<dbReference type="SMR" id="Q05522"/>
<dbReference type="FunCoup" id="Q05522">
    <property type="interactions" value="289"/>
</dbReference>
<dbReference type="STRING" id="224308.BSU16420"/>
<dbReference type="PaxDb" id="224308-BSU16420"/>
<dbReference type="EnsemblBacteria" id="CAB13515">
    <property type="protein sequence ID" value="CAB13515"/>
    <property type="gene ID" value="BSU_16420"/>
</dbReference>
<dbReference type="GeneID" id="940124"/>
<dbReference type="KEGG" id="bsu:BSU16420"/>
<dbReference type="PATRIC" id="fig|224308.179.peg.1783"/>
<dbReference type="eggNOG" id="COG2201">
    <property type="taxonomic scope" value="Bacteria"/>
</dbReference>
<dbReference type="InParanoid" id="Q05522"/>
<dbReference type="OrthoDB" id="9793421at2"/>
<dbReference type="PhylomeDB" id="Q05522"/>
<dbReference type="BioCyc" id="BSUB:BSU16420-MONOMER"/>
<dbReference type="Proteomes" id="UP000001570">
    <property type="component" value="Chromosome"/>
</dbReference>
<dbReference type="GO" id="GO:0005737">
    <property type="term" value="C:cytoplasm"/>
    <property type="evidence" value="ECO:0007669"/>
    <property type="project" value="UniProtKB-SubCell"/>
</dbReference>
<dbReference type="GO" id="GO:0000156">
    <property type="term" value="F:phosphorelay response regulator activity"/>
    <property type="evidence" value="ECO:0007669"/>
    <property type="project" value="InterPro"/>
</dbReference>
<dbReference type="GO" id="GO:0008984">
    <property type="term" value="F:protein-glutamate methylesterase activity"/>
    <property type="evidence" value="ECO:0007669"/>
    <property type="project" value="UniProtKB-UniRule"/>
</dbReference>
<dbReference type="GO" id="GO:0050568">
    <property type="term" value="F:protein-glutamine glutaminase activity"/>
    <property type="evidence" value="ECO:0007669"/>
    <property type="project" value="UniProtKB-UniRule"/>
</dbReference>
<dbReference type="GO" id="GO:0006935">
    <property type="term" value="P:chemotaxis"/>
    <property type="evidence" value="ECO:0007669"/>
    <property type="project" value="UniProtKB-UniRule"/>
</dbReference>
<dbReference type="CDD" id="cd16432">
    <property type="entry name" value="CheB_Rec"/>
    <property type="match status" value="1"/>
</dbReference>
<dbReference type="CDD" id="cd17541">
    <property type="entry name" value="REC_CheB-like"/>
    <property type="match status" value="1"/>
</dbReference>
<dbReference type="Gene3D" id="3.40.50.2300">
    <property type="match status" value="1"/>
</dbReference>
<dbReference type="Gene3D" id="3.40.50.180">
    <property type="entry name" value="Methylesterase CheB, C-terminal domain"/>
    <property type="match status" value="1"/>
</dbReference>
<dbReference type="HAMAP" id="MF_00099">
    <property type="entry name" value="CheB_chemtxs"/>
    <property type="match status" value="1"/>
</dbReference>
<dbReference type="InterPro" id="IPR008248">
    <property type="entry name" value="CheB-like"/>
</dbReference>
<dbReference type="InterPro" id="IPR035909">
    <property type="entry name" value="CheB_C"/>
</dbReference>
<dbReference type="InterPro" id="IPR011006">
    <property type="entry name" value="CheY-like_superfamily"/>
</dbReference>
<dbReference type="InterPro" id="IPR000673">
    <property type="entry name" value="Sig_transdc_resp-reg_Me-estase"/>
</dbReference>
<dbReference type="InterPro" id="IPR001789">
    <property type="entry name" value="Sig_transdc_resp-reg_receiver"/>
</dbReference>
<dbReference type="NCBIfam" id="NF001965">
    <property type="entry name" value="PRK00742.1"/>
    <property type="match status" value="1"/>
</dbReference>
<dbReference type="PANTHER" id="PTHR42872">
    <property type="entry name" value="PROTEIN-GLUTAMATE METHYLESTERASE/PROTEIN-GLUTAMINE GLUTAMINASE"/>
    <property type="match status" value="1"/>
</dbReference>
<dbReference type="PANTHER" id="PTHR42872:SF3">
    <property type="entry name" value="PROTEIN-GLUTAMATE METHYLESTERASE_PROTEIN-GLUTAMINE GLUTAMINASE 1"/>
    <property type="match status" value="1"/>
</dbReference>
<dbReference type="Pfam" id="PF01339">
    <property type="entry name" value="CheB_methylest"/>
    <property type="match status" value="1"/>
</dbReference>
<dbReference type="Pfam" id="PF00072">
    <property type="entry name" value="Response_reg"/>
    <property type="match status" value="1"/>
</dbReference>
<dbReference type="PIRSF" id="PIRSF000876">
    <property type="entry name" value="RR_chemtxs_CheB"/>
    <property type="match status" value="1"/>
</dbReference>
<dbReference type="SMART" id="SM00448">
    <property type="entry name" value="REC"/>
    <property type="match status" value="1"/>
</dbReference>
<dbReference type="SUPFAM" id="SSF52172">
    <property type="entry name" value="CheY-like"/>
    <property type="match status" value="1"/>
</dbReference>
<dbReference type="SUPFAM" id="SSF52738">
    <property type="entry name" value="Methylesterase CheB, C-terminal domain"/>
    <property type="match status" value="1"/>
</dbReference>
<dbReference type="PROSITE" id="PS50122">
    <property type="entry name" value="CHEB"/>
    <property type="match status" value="1"/>
</dbReference>
<dbReference type="PROSITE" id="PS50110">
    <property type="entry name" value="RESPONSE_REGULATORY"/>
    <property type="match status" value="1"/>
</dbReference>
<sequence>MIRVLVVDDSAFMRKMISDFLTEEKQIEVIGTARNGEEALKKIELLKPDVITLDVEMPVMNGTDTLRKIIEIYNLPVIMVSSQTEKGKECTINCLEIGAFDFITKPSGSISLDLYKIKEQLVERVVAAGLSGKRKRPVSQTVRPEPIVRAVVKPELSKPKPGTGRQIVCIGTSTGGPRALQKVIPKLPKDLNAPVVVVQHMPEGFTASLADRLNHLSDIQVKEAKDGEAALNGCVYIAPGGKNISVIKNSEGLQVVLDNHDTPSRHKPSADYLFRSVGKLTDYEKVAVIMTGMGSDGTAGLKDMLTAGNVKAIAESEESCVVYGMPKAAVKAGLIHEIKHVEDIAASITSCVKKERV</sequence>
<organism>
    <name type="scientific">Bacillus subtilis (strain 168)</name>
    <dbReference type="NCBI Taxonomy" id="224308"/>
    <lineage>
        <taxon>Bacteria</taxon>
        <taxon>Bacillati</taxon>
        <taxon>Bacillota</taxon>
        <taxon>Bacilli</taxon>
        <taxon>Bacillales</taxon>
        <taxon>Bacillaceae</taxon>
        <taxon>Bacillus</taxon>
    </lineage>
</organism>
<comment type="function">
    <text>Involved in the modulation of the chemotaxis system; catalyzes the demethylation of specific methylglutamate residues introduced into the chemoreceptors (methyl-accepting chemotaxis proteins) by CheR. B.subtilis has an effective methylation-independent adaptation system but must utilize the methylation system for adaptation to high concentrations of attractant.</text>
</comment>
<comment type="catalytic activity">
    <reaction evidence="1">
        <text>[protein]-L-glutamate 5-O-methyl ester + H2O = L-glutamyl-[protein] + methanol + H(+)</text>
        <dbReference type="Rhea" id="RHEA:23236"/>
        <dbReference type="Rhea" id="RHEA-COMP:10208"/>
        <dbReference type="Rhea" id="RHEA-COMP:10311"/>
        <dbReference type="ChEBI" id="CHEBI:15377"/>
        <dbReference type="ChEBI" id="CHEBI:15378"/>
        <dbReference type="ChEBI" id="CHEBI:17790"/>
        <dbReference type="ChEBI" id="CHEBI:29973"/>
        <dbReference type="ChEBI" id="CHEBI:82795"/>
        <dbReference type="EC" id="3.1.1.61"/>
    </reaction>
</comment>
<comment type="catalytic activity">
    <reaction evidence="1">
        <text>L-glutaminyl-[protein] + H2O = L-glutamyl-[protein] + NH4(+)</text>
        <dbReference type="Rhea" id="RHEA:16441"/>
        <dbReference type="Rhea" id="RHEA-COMP:10207"/>
        <dbReference type="Rhea" id="RHEA-COMP:10208"/>
        <dbReference type="ChEBI" id="CHEBI:15377"/>
        <dbReference type="ChEBI" id="CHEBI:28938"/>
        <dbReference type="ChEBI" id="CHEBI:29973"/>
        <dbReference type="ChEBI" id="CHEBI:30011"/>
        <dbReference type="EC" id="3.5.1.44"/>
    </reaction>
</comment>
<comment type="subcellular location">
    <subcellularLocation>
        <location evidence="1">Cytoplasm</location>
    </subcellularLocation>
</comment>
<comment type="domain">
    <text evidence="1">Contains a C-terminal catalytic domain, and an N-terminal region which modulates catalytic activity.</text>
</comment>
<comment type="PTM">
    <text evidence="1">Phosphorylated by CheA. Phosphorylation of the N-terminal regulatory domain activates the methylesterase activity.</text>
</comment>
<comment type="similarity">
    <text evidence="1">Belongs to the CheB family.</text>
</comment>
<protein>
    <recommendedName>
        <fullName evidence="1">Protein-glutamate methylesterase/protein-glutamine glutaminase</fullName>
        <ecNumber evidence="1">3.1.1.61</ecNumber>
        <ecNumber evidence="1">3.5.1.44</ecNumber>
    </recommendedName>
</protein>
<keyword id="KW-0145">Chemotaxis</keyword>
<keyword id="KW-0963">Cytoplasm</keyword>
<keyword id="KW-0378">Hydrolase</keyword>
<keyword id="KW-0597">Phosphoprotein</keyword>
<keyword id="KW-1185">Reference proteome</keyword>